<reference key="1">
    <citation type="journal article" date="2005" name="Science">
        <title>Extensive DNA inversions in the B. fragilis genome control variable gene expression.</title>
        <authorList>
            <person name="Cerdeno-Tarraga A.-M."/>
            <person name="Patrick S."/>
            <person name="Crossman L.C."/>
            <person name="Blakely G."/>
            <person name="Abratt V."/>
            <person name="Lennard N."/>
            <person name="Poxton I."/>
            <person name="Duerden B."/>
            <person name="Harris B."/>
            <person name="Quail M.A."/>
            <person name="Barron A."/>
            <person name="Clark L."/>
            <person name="Corton C."/>
            <person name="Doggett J."/>
            <person name="Holden M.T.G."/>
            <person name="Larke N."/>
            <person name="Line A."/>
            <person name="Lord A."/>
            <person name="Norbertczak H."/>
            <person name="Ormond D."/>
            <person name="Price C."/>
            <person name="Rabbinowitsch E."/>
            <person name="Woodward J."/>
            <person name="Barrell B.G."/>
            <person name="Parkhill J."/>
        </authorList>
    </citation>
    <scope>NUCLEOTIDE SEQUENCE [LARGE SCALE GENOMIC DNA]</scope>
    <source>
        <strain>ATCC 25285 / DSM 2151 / CCUG 4856 / JCM 11019 / LMG 10263 / NCTC 9343 / Onslow / VPI 2553 / EN-2</strain>
    </source>
</reference>
<comment type="function">
    <text evidence="1">One of the essential components for the initiation of protein synthesis. Stabilizes the binding of IF-2 and IF-3 on the 30S subunit to which N-formylmethionyl-tRNA(fMet) subsequently binds. Helps modulate mRNA selection, yielding the 30S pre-initiation complex (PIC). Upon addition of the 50S ribosomal subunit IF-1, IF-2 and IF-3 are released leaving the mature 70S translation initiation complex.</text>
</comment>
<comment type="subunit">
    <text evidence="1">Component of the 30S ribosomal translation pre-initiation complex which assembles on the 30S ribosome in the order IF-2 and IF-3, IF-1 and N-formylmethionyl-tRNA(fMet); mRNA recruitment can occur at any time during PIC assembly.</text>
</comment>
<comment type="subcellular location">
    <subcellularLocation>
        <location evidence="1">Cytoplasm</location>
    </subcellularLocation>
</comment>
<comment type="similarity">
    <text evidence="1">Belongs to the IF-1 family.</text>
</comment>
<feature type="chain" id="PRO_0000095732" description="Translation initiation factor IF-1">
    <location>
        <begin position="1"/>
        <end position="72"/>
    </location>
</feature>
<feature type="domain" description="S1-like" evidence="1">
    <location>
        <begin position="1"/>
        <end position="72"/>
    </location>
</feature>
<proteinExistence type="inferred from homology"/>
<name>IF1_BACFN</name>
<sequence>MAKQSAIEQDGVIVEALSNAMFRVELENGHEITAHISGKMRMHYIKILPGDKVRVEMSPYDLSKGRIVFRYK</sequence>
<dbReference type="EMBL" id="CR626927">
    <property type="protein sequence ID" value="CAH09657.1"/>
    <property type="molecule type" value="Genomic_DNA"/>
</dbReference>
<dbReference type="RefSeq" id="WP_002558052.1">
    <property type="nucleotide sequence ID" value="NZ_UFTH01000001.1"/>
</dbReference>
<dbReference type="SMR" id="Q5L8D1"/>
<dbReference type="PaxDb" id="272559-BF9343_3876"/>
<dbReference type="GeneID" id="9711838"/>
<dbReference type="KEGG" id="bfs:BF9343_3876"/>
<dbReference type="eggNOG" id="COG0361">
    <property type="taxonomic scope" value="Bacteria"/>
</dbReference>
<dbReference type="HOGENOM" id="CLU_151267_1_0_10"/>
<dbReference type="Proteomes" id="UP000006731">
    <property type="component" value="Chromosome"/>
</dbReference>
<dbReference type="GO" id="GO:0005829">
    <property type="term" value="C:cytosol"/>
    <property type="evidence" value="ECO:0007669"/>
    <property type="project" value="TreeGrafter"/>
</dbReference>
<dbReference type="GO" id="GO:0043022">
    <property type="term" value="F:ribosome binding"/>
    <property type="evidence" value="ECO:0007669"/>
    <property type="project" value="UniProtKB-UniRule"/>
</dbReference>
<dbReference type="GO" id="GO:0019843">
    <property type="term" value="F:rRNA binding"/>
    <property type="evidence" value="ECO:0007669"/>
    <property type="project" value="UniProtKB-UniRule"/>
</dbReference>
<dbReference type="GO" id="GO:0003743">
    <property type="term" value="F:translation initiation factor activity"/>
    <property type="evidence" value="ECO:0007669"/>
    <property type="project" value="UniProtKB-UniRule"/>
</dbReference>
<dbReference type="CDD" id="cd04451">
    <property type="entry name" value="S1_IF1"/>
    <property type="match status" value="1"/>
</dbReference>
<dbReference type="FunFam" id="2.40.50.140:FF:000002">
    <property type="entry name" value="Translation initiation factor IF-1"/>
    <property type="match status" value="1"/>
</dbReference>
<dbReference type="Gene3D" id="2.40.50.140">
    <property type="entry name" value="Nucleic acid-binding proteins"/>
    <property type="match status" value="1"/>
</dbReference>
<dbReference type="HAMAP" id="MF_00075">
    <property type="entry name" value="IF_1"/>
    <property type="match status" value="1"/>
</dbReference>
<dbReference type="InterPro" id="IPR012340">
    <property type="entry name" value="NA-bd_OB-fold"/>
</dbReference>
<dbReference type="InterPro" id="IPR006196">
    <property type="entry name" value="RNA-binding_domain_S1_IF1"/>
</dbReference>
<dbReference type="InterPro" id="IPR003029">
    <property type="entry name" value="S1_domain"/>
</dbReference>
<dbReference type="InterPro" id="IPR004368">
    <property type="entry name" value="TIF_IF1"/>
</dbReference>
<dbReference type="NCBIfam" id="TIGR00008">
    <property type="entry name" value="infA"/>
    <property type="match status" value="1"/>
</dbReference>
<dbReference type="PANTHER" id="PTHR33370">
    <property type="entry name" value="TRANSLATION INITIATION FACTOR IF-1, CHLOROPLASTIC"/>
    <property type="match status" value="1"/>
</dbReference>
<dbReference type="PANTHER" id="PTHR33370:SF1">
    <property type="entry name" value="TRANSLATION INITIATION FACTOR IF-1, CHLOROPLASTIC"/>
    <property type="match status" value="1"/>
</dbReference>
<dbReference type="Pfam" id="PF01176">
    <property type="entry name" value="eIF-1a"/>
    <property type="match status" value="1"/>
</dbReference>
<dbReference type="SMART" id="SM00316">
    <property type="entry name" value="S1"/>
    <property type="match status" value="1"/>
</dbReference>
<dbReference type="SUPFAM" id="SSF50249">
    <property type="entry name" value="Nucleic acid-binding proteins"/>
    <property type="match status" value="1"/>
</dbReference>
<dbReference type="PROSITE" id="PS50832">
    <property type="entry name" value="S1_IF1_TYPE"/>
    <property type="match status" value="1"/>
</dbReference>
<keyword id="KW-0963">Cytoplasm</keyword>
<keyword id="KW-0396">Initiation factor</keyword>
<keyword id="KW-0648">Protein biosynthesis</keyword>
<keyword id="KW-0694">RNA-binding</keyword>
<keyword id="KW-0699">rRNA-binding</keyword>
<gene>
    <name evidence="1" type="primary">infA</name>
    <name type="ordered locus">BF3981</name>
</gene>
<evidence type="ECO:0000255" key="1">
    <source>
        <dbReference type="HAMAP-Rule" id="MF_00075"/>
    </source>
</evidence>
<protein>
    <recommendedName>
        <fullName evidence="1">Translation initiation factor IF-1</fullName>
    </recommendedName>
</protein>
<accession>Q5L8D1</accession>
<organism>
    <name type="scientific">Bacteroides fragilis (strain ATCC 25285 / DSM 2151 / CCUG 4856 / JCM 11019 / LMG 10263 / NCTC 9343 / Onslow / VPI 2553 / EN-2)</name>
    <dbReference type="NCBI Taxonomy" id="272559"/>
    <lineage>
        <taxon>Bacteria</taxon>
        <taxon>Pseudomonadati</taxon>
        <taxon>Bacteroidota</taxon>
        <taxon>Bacteroidia</taxon>
        <taxon>Bacteroidales</taxon>
        <taxon>Bacteroidaceae</taxon>
        <taxon>Bacteroides</taxon>
    </lineage>
</organism>